<comment type="function">
    <text evidence="1">Required for spatial organization of the terminus region of the chromosome (Ter macrodomain) during the cell cycle. Prevents early segregation of duplicated Ter macrodomains during cell division. Binds specifically to matS, which is a 13 bp signature motif repeated within the Ter macrodomain.</text>
</comment>
<comment type="subunit">
    <text evidence="1">Homodimer.</text>
</comment>
<comment type="subcellular location">
    <subcellularLocation>
        <location evidence="1">Cytoplasm</location>
    </subcellularLocation>
</comment>
<comment type="similarity">
    <text evidence="1">Belongs to the MatP family.</text>
</comment>
<proteinExistence type="inferred from homology"/>
<dbReference type="EMBL" id="CP000266">
    <property type="protein sequence ID" value="ABF03186.1"/>
    <property type="molecule type" value="Genomic_DNA"/>
</dbReference>
<dbReference type="RefSeq" id="WP_000877161.1">
    <property type="nucleotide sequence ID" value="NC_008258.1"/>
</dbReference>
<dbReference type="SMR" id="Q0T679"/>
<dbReference type="GeneID" id="93776458"/>
<dbReference type="KEGG" id="sfv:SFV_0964"/>
<dbReference type="HOGENOM" id="CLU_142157_0_0_6"/>
<dbReference type="Proteomes" id="UP000000659">
    <property type="component" value="Chromosome"/>
</dbReference>
<dbReference type="GO" id="GO:0005737">
    <property type="term" value="C:cytoplasm"/>
    <property type="evidence" value="ECO:0007669"/>
    <property type="project" value="UniProtKB-SubCell"/>
</dbReference>
<dbReference type="GO" id="GO:0043565">
    <property type="term" value="F:sequence-specific DNA binding"/>
    <property type="evidence" value="ECO:0007669"/>
    <property type="project" value="UniProtKB-UniRule"/>
</dbReference>
<dbReference type="GO" id="GO:0051301">
    <property type="term" value="P:cell division"/>
    <property type="evidence" value="ECO:0007669"/>
    <property type="project" value="UniProtKB-UniRule"/>
</dbReference>
<dbReference type="GO" id="GO:0006355">
    <property type="term" value="P:regulation of DNA-templated transcription"/>
    <property type="evidence" value="ECO:0007669"/>
    <property type="project" value="InterPro"/>
</dbReference>
<dbReference type="FunFam" id="1.10.1220.10:FF:000004">
    <property type="entry name" value="Macrodomain Ter protein"/>
    <property type="match status" value="1"/>
</dbReference>
<dbReference type="FunFam" id="1.20.1270.380:FF:000001">
    <property type="entry name" value="Macrodomain Ter protein"/>
    <property type="match status" value="1"/>
</dbReference>
<dbReference type="Gene3D" id="1.20.1270.380">
    <property type="entry name" value="MatP, N-terminal domain"/>
    <property type="match status" value="1"/>
</dbReference>
<dbReference type="Gene3D" id="1.10.1220.10">
    <property type="entry name" value="Met repressor-like"/>
    <property type="match status" value="1"/>
</dbReference>
<dbReference type="HAMAP" id="MF_01073">
    <property type="entry name" value="MatP"/>
    <property type="match status" value="1"/>
</dbReference>
<dbReference type="InterPro" id="IPR013321">
    <property type="entry name" value="Arc_rbn_hlx_hlx"/>
</dbReference>
<dbReference type="InterPro" id="IPR009390">
    <property type="entry name" value="MatP"/>
</dbReference>
<dbReference type="InterPro" id="IPR035375">
    <property type="entry name" value="MatP_C"/>
</dbReference>
<dbReference type="InterPro" id="IPR035087">
    <property type="entry name" value="MatP_N"/>
</dbReference>
<dbReference type="InterPro" id="IPR038339">
    <property type="entry name" value="MatP_N_sf"/>
</dbReference>
<dbReference type="NCBIfam" id="NF003471">
    <property type="entry name" value="PRK05097.1"/>
    <property type="match status" value="1"/>
</dbReference>
<dbReference type="Pfam" id="PF06303">
    <property type="entry name" value="MatP"/>
    <property type="match status" value="1"/>
</dbReference>
<dbReference type="Pfam" id="PF17414">
    <property type="entry name" value="MatP_C"/>
    <property type="match status" value="1"/>
</dbReference>
<keyword id="KW-0131">Cell cycle</keyword>
<keyword id="KW-0132">Cell division</keyword>
<keyword id="KW-0963">Cytoplasm</keyword>
<keyword id="KW-0238">DNA-binding</keyword>
<protein>
    <recommendedName>
        <fullName evidence="1">Macrodomain Ter protein</fullName>
    </recommendedName>
</protein>
<gene>
    <name evidence="1" type="primary">matP</name>
    <name type="ordered locus">SFV_0964</name>
</gene>
<evidence type="ECO:0000255" key="1">
    <source>
        <dbReference type="HAMAP-Rule" id="MF_01073"/>
    </source>
</evidence>
<feature type="chain" id="PRO_1000064637" description="Macrodomain Ter protein">
    <location>
        <begin position="1"/>
        <end position="150"/>
    </location>
</feature>
<reference key="1">
    <citation type="journal article" date="2006" name="BMC Genomics">
        <title>Complete genome sequence of Shigella flexneri 5b and comparison with Shigella flexneri 2a.</title>
        <authorList>
            <person name="Nie H."/>
            <person name="Yang F."/>
            <person name="Zhang X."/>
            <person name="Yang J."/>
            <person name="Chen L."/>
            <person name="Wang J."/>
            <person name="Xiong Z."/>
            <person name="Peng J."/>
            <person name="Sun L."/>
            <person name="Dong J."/>
            <person name="Xue Y."/>
            <person name="Xu X."/>
            <person name="Chen S."/>
            <person name="Yao Z."/>
            <person name="Shen Y."/>
            <person name="Jin Q."/>
        </authorList>
    </citation>
    <scope>NUCLEOTIDE SEQUENCE [LARGE SCALE GENOMIC DNA]</scope>
    <source>
        <strain>8401</strain>
    </source>
</reference>
<organism>
    <name type="scientific">Shigella flexneri serotype 5b (strain 8401)</name>
    <dbReference type="NCBI Taxonomy" id="373384"/>
    <lineage>
        <taxon>Bacteria</taxon>
        <taxon>Pseudomonadati</taxon>
        <taxon>Pseudomonadota</taxon>
        <taxon>Gammaproteobacteria</taxon>
        <taxon>Enterobacterales</taxon>
        <taxon>Enterobacteriaceae</taxon>
        <taxon>Shigella</taxon>
    </lineage>
</organism>
<sequence>MKYQQLENLESGWKWKYLVKKHREGELITRYIEASAAQEAVDVLLSLENEPVLVNGWIDKHMNPELVNRMKQTIRARRKRHFNAEHQHTRKKSIDLEFIVWQRLAGLAQRRGKTLSETIVQLIEDAENKEKYANKMSSLKQDLQALLGKE</sequence>
<accession>Q0T679</accession>
<name>MATP_SHIF8</name>